<evidence type="ECO:0000255" key="1">
    <source>
        <dbReference type="PROSITE-ProRule" id="PRU00407"/>
    </source>
</evidence>
<evidence type="ECO:0000255" key="2">
    <source>
        <dbReference type="PROSITE-ProRule" id="PRU01189"/>
    </source>
</evidence>
<evidence type="ECO:0000305" key="3"/>
<name>NH174_CAEEL</name>
<keyword id="KW-0238">DNA-binding</keyword>
<keyword id="KW-0479">Metal-binding</keyword>
<keyword id="KW-0539">Nucleus</keyword>
<keyword id="KW-0675">Receptor</keyword>
<keyword id="KW-1185">Reference proteome</keyword>
<keyword id="KW-0804">Transcription</keyword>
<keyword id="KW-0805">Transcription regulation</keyword>
<keyword id="KW-0862">Zinc</keyword>
<keyword id="KW-0863">Zinc-finger</keyword>
<comment type="function">
    <text>Orphan nuclear receptor.</text>
</comment>
<comment type="subcellular location">
    <subcellularLocation>
        <location evidence="1">Nucleus</location>
    </subcellularLocation>
</comment>
<comment type="similarity">
    <text evidence="3">Belongs to the nuclear hormone receptor family.</text>
</comment>
<reference key="1">
    <citation type="journal article" date="1998" name="Science">
        <title>Genome sequence of the nematode C. elegans: a platform for investigating biology.</title>
        <authorList>
            <consortium name="The C. elegans sequencing consortium"/>
        </authorList>
    </citation>
    <scope>NUCLEOTIDE SEQUENCE [LARGE SCALE GENOMIC DNA]</scope>
    <source>
        <strain>Bristol N2</strain>
    </source>
</reference>
<accession>O17748</accession>
<dbReference type="EMBL" id="BX284601">
    <property type="protein sequence ID" value="CAB04030.3"/>
    <property type="molecule type" value="Genomic_DNA"/>
</dbReference>
<dbReference type="PIR" id="T20444">
    <property type="entry name" value="T20444"/>
</dbReference>
<dbReference type="RefSeq" id="NP_493149.2">
    <property type="nucleotide sequence ID" value="NM_060748.4"/>
</dbReference>
<dbReference type="SMR" id="O17748"/>
<dbReference type="FunCoup" id="O17748">
    <property type="interactions" value="173"/>
</dbReference>
<dbReference type="STRING" id="6239.E03H4.6.1"/>
<dbReference type="PaxDb" id="6239-E03H4.6"/>
<dbReference type="EnsemblMetazoa" id="E03H4.6.1">
    <property type="protein sequence ID" value="E03H4.6.1"/>
    <property type="gene ID" value="WBGene00008474"/>
</dbReference>
<dbReference type="GeneID" id="184021"/>
<dbReference type="KEGG" id="cel:CELE_E03H4.6"/>
<dbReference type="UCSC" id="E03H4.6">
    <property type="organism name" value="c. elegans"/>
</dbReference>
<dbReference type="AGR" id="WB:WBGene00008474"/>
<dbReference type="CTD" id="184021"/>
<dbReference type="WormBase" id="E03H4.6">
    <property type="protein sequence ID" value="CE42474"/>
    <property type="gene ID" value="WBGene00008474"/>
    <property type="gene designation" value="nhr-174"/>
</dbReference>
<dbReference type="eggNOG" id="KOG3575">
    <property type="taxonomic scope" value="Eukaryota"/>
</dbReference>
<dbReference type="GeneTree" id="ENSGT00970000195849"/>
<dbReference type="HOGENOM" id="CLU_066719_0_0_1"/>
<dbReference type="InParanoid" id="O17748"/>
<dbReference type="OMA" id="VWIESAW"/>
<dbReference type="OrthoDB" id="5830034at2759"/>
<dbReference type="PhylomeDB" id="O17748"/>
<dbReference type="PRO" id="PR:O17748"/>
<dbReference type="Proteomes" id="UP000001940">
    <property type="component" value="Chromosome I"/>
</dbReference>
<dbReference type="Bgee" id="WBGene00008474">
    <property type="expression patterns" value="Expressed in pharyngeal muscle cell (C elegans)"/>
</dbReference>
<dbReference type="GO" id="GO:0005634">
    <property type="term" value="C:nucleus"/>
    <property type="evidence" value="ECO:0007669"/>
    <property type="project" value="UniProtKB-SubCell"/>
</dbReference>
<dbReference type="GO" id="GO:0003700">
    <property type="term" value="F:DNA-binding transcription factor activity"/>
    <property type="evidence" value="ECO:0007669"/>
    <property type="project" value="InterPro"/>
</dbReference>
<dbReference type="GO" id="GO:0043565">
    <property type="term" value="F:sequence-specific DNA binding"/>
    <property type="evidence" value="ECO:0007669"/>
    <property type="project" value="InterPro"/>
</dbReference>
<dbReference type="GO" id="GO:0008270">
    <property type="term" value="F:zinc ion binding"/>
    <property type="evidence" value="ECO:0007669"/>
    <property type="project" value="UniProtKB-KW"/>
</dbReference>
<dbReference type="Gene3D" id="3.30.50.10">
    <property type="entry name" value="Erythroid Transcription Factor GATA-1, subunit A"/>
    <property type="match status" value="1"/>
</dbReference>
<dbReference type="Gene3D" id="1.10.565.10">
    <property type="entry name" value="Retinoid X Receptor"/>
    <property type="match status" value="1"/>
</dbReference>
<dbReference type="InterPro" id="IPR035500">
    <property type="entry name" value="NHR-like_dom_sf"/>
</dbReference>
<dbReference type="InterPro" id="IPR000536">
    <property type="entry name" value="Nucl_hrmn_rcpt_lig-bd"/>
</dbReference>
<dbReference type="InterPro" id="IPR001628">
    <property type="entry name" value="Znf_hrmn_rcpt"/>
</dbReference>
<dbReference type="InterPro" id="IPR013088">
    <property type="entry name" value="Znf_NHR/GATA"/>
</dbReference>
<dbReference type="PANTHER" id="PTHR46397:SF3">
    <property type="entry name" value="NR LBD DOMAIN-CONTAINING PROTEIN-RELATED"/>
    <property type="match status" value="1"/>
</dbReference>
<dbReference type="PANTHER" id="PTHR46397">
    <property type="entry name" value="NUCLEAR HORMONE RECEPTOR FAMILY-RELATED"/>
    <property type="match status" value="1"/>
</dbReference>
<dbReference type="Pfam" id="PF00104">
    <property type="entry name" value="Hormone_recep"/>
    <property type="match status" value="1"/>
</dbReference>
<dbReference type="Pfam" id="PF00105">
    <property type="entry name" value="zf-C4"/>
    <property type="match status" value="1"/>
</dbReference>
<dbReference type="SMART" id="SM00430">
    <property type="entry name" value="HOLI"/>
    <property type="match status" value="1"/>
</dbReference>
<dbReference type="SMART" id="SM00399">
    <property type="entry name" value="ZnF_C4"/>
    <property type="match status" value="1"/>
</dbReference>
<dbReference type="SUPFAM" id="SSF57716">
    <property type="entry name" value="Glucocorticoid receptor-like (DNA-binding domain)"/>
    <property type="match status" value="1"/>
</dbReference>
<dbReference type="SUPFAM" id="SSF48508">
    <property type="entry name" value="Nuclear receptor ligand-binding domain"/>
    <property type="match status" value="1"/>
</dbReference>
<dbReference type="PROSITE" id="PS51843">
    <property type="entry name" value="NR_LBD"/>
    <property type="match status" value="1"/>
</dbReference>
<dbReference type="PROSITE" id="PS00031">
    <property type="entry name" value="NUCLEAR_REC_DBD_1"/>
    <property type="match status" value="1"/>
</dbReference>
<dbReference type="PROSITE" id="PS51030">
    <property type="entry name" value="NUCLEAR_REC_DBD_2"/>
    <property type="match status" value="1"/>
</dbReference>
<proteinExistence type="inferred from homology"/>
<gene>
    <name type="primary">nhr-174</name>
    <name type="ORF">E03H4.6</name>
</gene>
<protein>
    <recommendedName>
        <fullName>Nuclear hormone receptor family member nhr-174</fullName>
    </recommendedName>
</protein>
<feature type="chain" id="PRO_0000223602" description="Nuclear hormone receptor family member nhr-174">
    <location>
        <begin position="1"/>
        <end position="319"/>
    </location>
</feature>
<feature type="domain" description="NR LBD" evidence="2">
    <location>
        <begin position="130"/>
        <end position="319"/>
    </location>
</feature>
<feature type="DNA-binding region" description="Nuclear receptor" evidence="1">
    <location>
        <begin position="7"/>
        <end position="81"/>
    </location>
</feature>
<feature type="zinc finger region" description="NR C4-type" evidence="1">
    <location>
        <begin position="10"/>
        <end position="31"/>
    </location>
</feature>
<feature type="zinc finger region" description="NR C4-type" evidence="1">
    <location>
        <begin position="47"/>
        <end position="63"/>
    </location>
</feature>
<sequence>MTIILTDPVCPVCEFPSNVELHFGGLVCGACAAFFRRTVSLNIRYLCEKKNQCKGKRKNCRACRFDYCVKIAGMKRNLVRQRKNSTNTPMYILNRRKDSGNEEVVRGFVTSTQSKWAQHSRKSSMSPNKEAEKDVSKILKISHGRLLKYYIYQITQGKWVNMNTLNIKSVEEFLEITSIHNKLAAEICKTCPGVDLLDNEDILTIRKYFQFSNVWIESAWNYLMSADKHVQIDDSELDLTLLKFINQVKSTLLVSLSQLKFNTIEFAAFKSICIWKLVYHGTSRAMKIIAQEHYEGVAKALNDYYQTYTSMKKSRYLQF</sequence>
<organism>
    <name type="scientific">Caenorhabditis elegans</name>
    <dbReference type="NCBI Taxonomy" id="6239"/>
    <lineage>
        <taxon>Eukaryota</taxon>
        <taxon>Metazoa</taxon>
        <taxon>Ecdysozoa</taxon>
        <taxon>Nematoda</taxon>
        <taxon>Chromadorea</taxon>
        <taxon>Rhabditida</taxon>
        <taxon>Rhabditina</taxon>
        <taxon>Rhabditomorpha</taxon>
        <taxon>Rhabditoidea</taxon>
        <taxon>Rhabditidae</taxon>
        <taxon>Peloderinae</taxon>
        <taxon>Caenorhabditis</taxon>
    </lineage>
</organism>